<organism>
    <name type="scientific">Haemophilus ducreyi (strain 35000HP / ATCC 700724)</name>
    <dbReference type="NCBI Taxonomy" id="233412"/>
    <lineage>
        <taxon>Bacteria</taxon>
        <taxon>Pseudomonadati</taxon>
        <taxon>Pseudomonadota</taxon>
        <taxon>Gammaproteobacteria</taxon>
        <taxon>Pasteurellales</taxon>
        <taxon>Pasteurellaceae</taxon>
        <taxon>Haemophilus</taxon>
    </lineage>
</organism>
<proteinExistence type="inferred from homology"/>
<sequence length="351" mass="39474">MLEINIHQQLGSLNLTVNLHIAAKGVTAILGRSGAGKSSLINLIAGLTTAQRGYIKLGEQTLYDHEQGINLAPEKRHIGYVFQEHRLFPHYSVAKNLKYGCKRVDNAHFLQIVKLLGIEHLLNRYPSSLSGGEKQRVAIGRALLTKPQILLMDEPLSALDLPRKQELITYLSQLANQVDIPILYVTHSLDEIIRLADQLILLEQGKIIAFDLVVNVWHSDILADWQSETQKISLLELPLNIQQPIYKMVGLKLGKQHIWIPATPHYKIGDKLRITIASKDVSISLDQVQHSSIRNILNGVITQIVEHNDRVDIAVLIETHQIWASISLWSFDELALKIGQQIYVQIKSVSL</sequence>
<keyword id="KW-0067">ATP-binding</keyword>
<keyword id="KW-0997">Cell inner membrane</keyword>
<keyword id="KW-1003">Cell membrane</keyword>
<keyword id="KW-0472">Membrane</keyword>
<keyword id="KW-0500">Molybdenum</keyword>
<keyword id="KW-0547">Nucleotide-binding</keyword>
<keyword id="KW-1185">Reference proteome</keyword>
<keyword id="KW-1278">Translocase</keyword>
<keyword id="KW-0813">Transport</keyword>
<evidence type="ECO:0000255" key="1">
    <source>
        <dbReference type="HAMAP-Rule" id="MF_01705"/>
    </source>
</evidence>
<evidence type="ECO:0000255" key="2">
    <source>
        <dbReference type="PROSITE-ProRule" id="PRU01213"/>
    </source>
</evidence>
<reference key="1">
    <citation type="submission" date="2003-06" db="EMBL/GenBank/DDBJ databases">
        <title>The complete genome sequence of Haemophilus ducreyi.</title>
        <authorList>
            <person name="Munson R.S. Jr."/>
            <person name="Ray W.C."/>
            <person name="Mahairas G."/>
            <person name="Sabo P."/>
            <person name="Mungur R."/>
            <person name="Johnson L."/>
            <person name="Nguyen D."/>
            <person name="Wang J."/>
            <person name="Forst C."/>
            <person name="Hood L."/>
        </authorList>
    </citation>
    <scope>NUCLEOTIDE SEQUENCE [LARGE SCALE GENOMIC DNA]</scope>
    <source>
        <strain>35000HP / ATCC 700724</strain>
    </source>
</reference>
<gene>
    <name evidence="1" type="primary">modC</name>
    <name type="ordered locus">HD_1826</name>
</gene>
<accession>Q7VKP7</accession>
<comment type="function">
    <text evidence="1">Part of the ABC transporter complex ModABC involved in molybdenum import. Responsible for energy coupling to the transport system.</text>
</comment>
<comment type="catalytic activity">
    <reaction evidence="1">
        <text>molybdate(out) + ATP + H2O = molybdate(in) + ADP + phosphate + H(+)</text>
        <dbReference type="Rhea" id="RHEA:22020"/>
        <dbReference type="ChEBI" id="CHEBI:15377"/>
        <dbReference type="ChEBI" id="CHEBI:15378"/>
        <dbReference type="ChEBI" id="CHEBI:30616"/>
        <dbReference type="ChEBI" id="CHEBI:36264"/>
        <dbReference type="ChEBI" id="CHEBI:43474"/>
        <dbReference type="ChEBI" id="CHEBI:456216"/>
        <dbReference type="EC" id="7.3.2.5"/>
    </reaction>
</comment>
<comment type="subunit">
    <text evidence="1">The complex is composed of two ATP-binding proteins (ModC), two transmembrane proteins (ModB) and a solute-binding protein (ModA).</text>
</comment>
<comment type="subcellular location">
    <subcellularLocation>
        <location evidence="1">Cell inner membrane</location>
        <topology evidence="1">Peripheral membrane protein</topology>
    </subcellularLocation>
</comment>
<comment type="similarity">
    <text evidence="1">Belongs to the ABC transporter superfamily. Molybdate importer (TC 3.A.1.8) family.</text>
</comment>
<protein>
    <recommendedName>
        <fullName evidence="1">Molybdenum import ATP-binding protein ModC</fullName>
        <ecNumber evidence="1">7.3.2.5</ecNumber>
    </recommendedName>
</protein>
<name>MODC_HAEDU</name>
<feature type="chain" id="PRO_0000092541" description="Molybdenum import ATP-binding protein ModC">
    <location>
        <begin position="1"/>
        <end position="351"/>
    </location>
</feature>
<feature type="domain" description="ABC transporter" evidence="1">
    <location>
        <begin position="1"/>
        <end position="229"/>
    </location>
</feature>
<feature type="domain" description="Mop" evidence="2">
    <location>
        <begin position="290"/>
        <end position="351"/>
    </location>
</feature>
<feature type="binding site" evidence="1">
    <location>
        <begin position="31"/>
        <end position="38"/>
    </location>
    <ligand>
        <name>ATP</name>
        <dbReference type="ChEBI" id="CHEBI:30616"/>
    </ligand>
</feature>
<dbReference type="EC" id="7.3.2.5" evidence="1"/>
<dbReference type="EMBL" id="AE017143">
    <property type="protein sequence ID" value="AAP96575.1"/>
    <property type="molecule type" value="Genomic_DNA"/>
</dbReference>
<dbReference type="RefSeq" id="WP_010945604.1">
    <property type="nucleotide sequence ID" value="NC_002940.2"/>
</dbReference>
<dbReference type="SMR" id="Q7VKP7"/>
<dbReference type="STRING" id="233412.HD_1826"/>
<dbReference type="KEGG" id="hdu:HD_1826"/>
<dbReference type="eggNOG" id="COG4148">
    <property type="taxonomic scope" value="Bacteria"/>
</dbReference>
<dbReference type="HOGENOM" id="CLU_000604_1_1_6"/>
<dbReference type="OrthoDB" id="9802264at2"/>
<dbReference type="Proteomes" id="UP000001022">
    <property type="component" value="Chromosome"/>
</dbReference>
<dbReference type="GO" id="GO:0005886">
    <property type="term" value="C:plasma membrane"/>
    <property type="evidence" value="ECO:0007669"/>
    <property type="project" value="UniProtKB-SubCell"/>
</dbReference>
<dbReference type="GO" id="GO:0015412">
    <property type="term" value="F:ABC-type molybdate transporter activity"/>
    <property type="evidence" value="ECO:0007669"/>
    <property type="project" value="UniProtKB-EC"/>
</dbReference>
<dbReference type="GO" id="GO:0005524">
    <property type="term" value="F:ATP binding"/>
    <property type="evidence" value="ECO:0007669"/>
    <property type="project" value="UniProtKB-KW"/>
</dbReference>
<dbReference type="GO" id="GO:0016887">
    <property type="term" value="F:ATP hydrolysis activity"/>
    <property type="evidence" value="ECO:0007669"/>
    <property type="project" value="InterPro"/>
</dbReference>
<dbReference type="FunFam" id="3.40.50.300:FF:000634">
    <property type="entry name" value="Molybdenum import ATP-binding protein ModC"/>
    <property type="match status" value="1"/>
</dbReference>
<dbReference type="Gene3D" id="2.40.50.100">
    <property type="match status" value="1"/>
</dbReference>
<dbReference type="Gene3D" id="3.40.50.300">
    <property type="entry name" value="P-loop containing nucleotide triphosphate hydrolases"/>
    <property type="match status" value="1"/>
</dbReference>
<dbReference type="InterPro" id="IPR003593">
    <property type="entry name" value="AAA+_ATPase"/>
</dbReference>
<dbReference type="InterPro" id="IPR003439">
    <property type="entry name" value="ABC_transporter-like_ATP-bd"/>
</dbReference>
<dbReference type="InterPro" id="IPR017871">
    <property type="entry name" value="ABC_transporter-like_CS"/>
</dbReference>
<dbReference type="InterPro" id="IPR008995">
    <property type="entry name" value="Mo/tungstate-bd_C_term_dom"/>
</dbReference>
<dbReference type="InterPro" id="IPR011868">
    <property type="entry name" value="ModC_ABC_ATP-bd"/>
</dbReference>
<dbReference type="InterPro" id="IPR050334">
    <property type="entry name" value="Molybdenum_import_ModC"/>
</dbReference>
<dbReference type="InterPro" id="IPR004606">
    <property type="entry name" value="Mop_domain"/>
</dbReference>
<dbReference type="InterPro" id="IPR027417">
    <property type="entry name" value="P-loop_NTPase"/>
</dbReference>
<dbReference type="InterPro" id="IPR005116">
    <property type="entry name" value="Transp-assoc_OB_typ1"/>
</dbReference>
<dbReference type="NCBIfam" id="TIGR02142">
    <property type="entry name" value="modC_ABC"/>
    <property type="match status" value="1"/>
</dbReference>
<dbReference type="NCBIfam" id="NF008355">
    <property type="entry name" value="PRK11144.1"/>
    <property type="match status" value="1"/>
</dbReference>
<dbReference type="PANTHER" id="PTHR43514">
    <property type="entry name" value="ABC TRANSPORTER I FAMILY MEMBER 10"/>
    <property type="match status" value="1"/>
</dbReference>
<dbReference type="PANTHER" id="PTHR43514:SF4">
    <property type="entry name" value="ABC TRANSPORTER I FAMILY MEMBER 10"/>
    <property type="match status" value="1"/>
</dbReference>
<dbReference type="Pfam" id="PF00005">
    <property type="entry name" value="ABC_tran"/>
    <property type="match status" value="1"/>
</dbReference>
<dbReference type="Pfam" id="PF03459">
    <property type="entry name" value="TOBE"/>
    <property type="match status" value="1"/>
</dbReference>
<dbReference type="SMART" id="SM00382">
    <property type="entry name" value="AAA"/>
    <property type="match status" value="1"/>
</dbReference>
<dbReference type="SUPFAM" id="SSF50331">
    <property type="entry name" value="MOP-like"/>
    <property type="match status" value="1"/>
</dbReference>
<dbReference type="SUPFAM" id="SSF52540">
    <property type="entry name" value="P-loop containing nucleoside triphosphate hydrolases"/>
    <property type="match status" value="1"/>
</dbReference>
<dbReference type="PROSITE" id="PS00211">
    <property type="entry name" value="ABC_TRANSPORTER_1"/>
    <property type="match status" value="1"/>
</dbReference>
<dbReference type="PROSITE" id="PS50893">
    <property type="entry name" value="ABC_TRANSPORTER_2"/>
    <property type="match status" value="1"/>
</dbReference>
<dbReference type="PROSITE" id="PS51241">
    <property type="entry name" value="MODC"/>
    <property type="match status" value="1"/>
</dbReference>
<dbReference type="PROSITE" id="PS51866">
    <property type="entry name" value="MOP"/>
    <property type="match status" value="1"/>
</dbReference>